<protein>
    <recommendedName>
        <fullName>Protein YkfC</fullName>
    </recommendedName>
</protein>
<sequence>MIISEMQRKLATWAATDPSLRIQRLLRLITQPEWLAEAARITLSSKGAHTPGVDGVNKTMLQARLAVELQILRDELLSGHYQPLPARRVYIPKSNGKLRPLGIPALRDRIVQRAMLMAMEPIWESDFHTLSYGFRPERSVHHAIRTVKLQLTDCGETRGRWVIEGDLSSYFDTVHHRLLMKAVRRRISDARFMTLLWKTIKAGHIDVGLFRAASEGVPQGGVISPLLSNIMLNEFDQYLHERYLSGKARKDRWYWNNSIQRGRSTAVRENWQWKPAVAYCRYADDFVLIVKGTKAQVEAIREECRGVLEGSLKLRLNMDKTKIPHVNDGFIFLGHRLIRKRSRYGEMRVVSTIPQEKARNFAASLTALLWKVRISGEILLG</sequence>
<gene>
    <name type="primary">ykfC</name>
    <name type="ordered locus">b0258</name>
    <name type="ordered locus">JW5813</name>
</gene>
<reference key="1">
    <citation type="submission" date="1996-02" db="EMBL/GenBank/DDBJ databases">
        <title>Systematic sequencing of the Escherichia coli genome: analysis of the 4.0 - 6.0 min (189,987 - 281,416bp) region.</title>
        <authorList>
            <person name="Takemoto K."/>
            <person name="Mori H."/>
            <person name="Murayama N."/>
            <person name="Kataoka K."/>
            <person name="Yano M."/>
            <person name="Itoh T."/>
            <person name="Yamamoto Y."/>
            <person name="Inokuchi H."/>
            <person name="Miki T."/>
            <person name="Hatada E."/>
            <person name="Fukuda R."/>
            <person name="Ichihara S."/>
            <person name="Mizuno T."/>
            <person name="Makino K."/>
            <person name="Nakata A."/>
            <person name="Yura T."/>
            <person name="Sampei G."/>
            <person name="Mizobuchi K."/>
        </authorList>
    </citation>
    <scope>NUCLEOTIDE SEQUENCE [LARGE SCALE GENOMIC DNA]</scope>
    <source>
        <strain>K12 / W3110 / ATCC 27325 / DSM 5911</strain>
    </source>
</reference>
<reference key="2">
    <citation type="submission" date="1997-01" db="EMBL/GenBank/DDBJ databases">
        <title>Sequence of minutes 4-25 of Escherichia coli.</title>
        <authorList>
            <person name="Chung E."/>
            <person name="Allen E."/>
            <person name="Araujo R."/>
            <person name="Aparicio A.M."/>
            <person name="Davis K."/>
            <person name="Duncan M."/>
            <person name="Federspiel N."/>
            <person name="Hyman R."/>
            <person name="Kalman S."/>
            <person name="Komp C."/>
            <person name="Kurdi O."/>
            <person name="Lew H."/>
            <person name="Lin D."/>
            <person name="Namath A."/>
            <person name="Oefner P."/>
            <person name="Roberts D."/>
            <person name="Schramm S."/>
            <person name="Davis R.W."/>
        </authorList>
    </citation>
    <scope>NUCLEOTIDE SEQUENCE [LARGE SCALE GENOMIC DNA]</scope>
    <source>
        <strain>K12 / MG1655 / ATCC 47076</strain>
    </source>
</reference>
<reference key="3">
    <citation type="journal article" date="1997" name="Science">
        <title>The complete genome sequence of Escherichia coli K-12.</title>
        <authorList>
            <person name="Blattner F.R."/>
            <person name="Plunkett G. III"/>
            <person name="Bloch C.A."/>
            <person name="Perna N.T."/>
            <person name="Burland V."/>
            <person name="Riley M."/>
            <person name="Collado-Vides J."/>
            <person name="Glasner J.D."/>
            <person name="Rode C.K."/>
            <person name="Mayhew G.F."/>
            <person name="Gregor J."/>
            <person name="Davis N.W."/>
            <person name="Kirkpatrick H.A."/>
            <person name="Goeden M.A."/>
            <person name="Rose D.J."/>
            <person name="Mau B."/>
            <person name="Shao Y."/>
        </authorList>
    </citation>
    <scope>NUCLEOTIDE SEQUENCE [LARGE SCALE GENOMIC DNA]</scope>
    <source>
        <strain>K12 / MG1655 / ATCC 47076</strain>
    </source>
</reference>
<reference key="4">
    <citation type="journal article" date="2006" name="Mol. Syst. Biol.">
        <title>Highly accurate genome sequences of Escherichia coli K-12 strains MG1655 and W3110.</title>
        <authorList>
            <person name="Hayashi K."/>
            <person name="Morooka N."/>
            <person name="Yamamoto Y."/>
            <person name="Fujita K."/>
            <person name="Isono K."/>
            <person name="Choi S."/>
            <person name="Ohtsubo E."/>
            <person name="Baba T."/>
            <person name="Wanner B.L."/>
            <person name="Mori H."/>
            <person name="Horiuchi T."/>
        </authorList>
    </citation>
    <scope>NUCLEOTIDE SEQUENCE [LARGE SCALE GENOMIC DNA]</scope>
    <source>
        <strain>K12 / W3110 / ATCC 27325 / DSM 5911</strain>
    </source>
</reference>
<organism>
    <name type="scientific">Escherichia coli (strain K12)</name>
    <dbReference type="NCBI Taxonomy" id="83333"/>
    <lineage>
        <taxon>Bacteria</taxon>
        <taxon>Pseudomonadati</taxon>
        <taxon>Pseudomonadota</taxon>
        <taxon>Gammaproteobacteria</taxon>
        <taxon>Enterobacterales</taxon>
        <taxon>Enterobacteriaceae</taxon>
        <taxon>Escherichia</taxon>
    </lineage>
</organism>
<feature type="chain" id="PRO_0000168548" description="Protein YkfC">
    <location>
        <begin position="1"/>
        <end position="381"/>
    </location>
</feature>
<feature type="domain" description="Reverse transcriptase" evidence="1">
    <location>
        <begin position="72"/>
        <end position="337"/>
    </location>
</feature>
<feature type="binding site" evidence="1">
    <location>
        <position position="166"/>
    </location>
    <ligand>
        <name>Mg(2+)</name>
        <dbReference type="ChEBI" id="CHEBI:18420"/>
        <note>catalytic</note>
    </ligand>
</feature>
<feature type="binding site" evidence="1">
    <location>
        <position position="284"/>
    </location>
    <ligand>
        <name>Mg(2+)</name>
        <dbReference type="ChEBI" id="CHEBI:18420"/>
        <note>catalytic</note>
    </ligand>
</feature>
<feature type="binding site" evidence="1">
    <location>
        <position position="285"/>
    </location>
    <ligand>
        <name>Mg(2+)</name>
        <dbReference type="ChEBI" id="CHEBI:18420"/>
        <note>catalytic</note>
    </ligand>
</feature>
<dbReference type="EMBL" id="U70214">
    <property type="protein sequence ID" value="AAB08678.1"/>
    <property type="status" value="ALT_INIT"/>
    <property type="molecule type" value="Genomic_DNA"/>
</dbReference>
<dbReference type="EMBL" id="U00096">
    <property type="protein sequence ID" value="AYC08169.1"/>
    <property type="molecule type" value="Genomic_DNA"/>
</dbReference>
<dbReference type="EMBL" id="AP009048">
    <property type="protein sequence ID" value="BAA77927.2"/>
    <property type="molecule type" value="Genomic_DNA"/>
</dbReference>
<dbReference type="PIR" id="B64751">
    <property type="entry name" value="B64751"/>
</dbReference>
<dbReference type="SMR" id="Q47688"/>
<dbReference type="BioGRID" id="4262795">
    <property type="interactions" value="120"/>
</dbReference>
<dbReference type="FunCoup" id="Q47688">
    <property type="interactions" value="23"/>
</dbReference>
<dbReference type="EnsemblBacteria" id="AYC08169">
    <property type="protein sequence ID" value="AYC08169"/>
    <property type="gene ID" value="b0258"/>
</dbReference>
<dbReference type="KEGG" id="ecj:JW5813"/>
<dbReference type="EchoBASE" id="EB3125"/>
<dbReference type="eggNOG" id="COG3344">
    <property type="taxonomic scope" value="Bacteria"/>
</dbReference>
<dbReference type="HOGENOM" id="CLU_013584_4_0_6"/>
<dbReference type="InParanoid" id="Q47688"/>
<dbReference type="PhylomeDB" id="Q47688"/>
<dbReference type="BioCyc" id="EcoCyc:G6133-MONOMER"/>
<dbReference type="PRO" id="PR:Q47688"/>
<dbReference type="Proteomes" id="UP000000625">
    <property type="component" value="Chromosome"/>
</dbReference>
<dbReference type="GO" id="GO:0046872">
    <property type="term" value="F:metal ion binding"/>
    <property type="evidence" value="ECO:0007669"/>
    <property type="project" value="UniProtKB-KW"/>
</dbReference>
<dbReference type="CDD" id="cd01651">
    <property type="entry name" value="RT_G2_intron"/>
    <property type="match status" value="1"/>
</dbReference>
<dbReference type="InterPro" id="IPR043502">
    <property type="entry name" value="DNA/RNA_pol_sf"/>
</dbReference>
<dbReference type="InterPro" id="IPR051083">
    <property type="entry name" value="GrpII_Intron_Splice-Mob/Def"/>
</dbReference>
<dbReference type="InterPro" id="IPR000477">
    <property type="entry name" value="RT_dom"/>
</dbReference>
<dbReference type="PANTHER" id="PTHR34047">
    <property type="entry name" value="NUCLEAR INTRON MATURASE 1, MITOCHONDRIAL-RELATED"/>
    <property type="match status" value="1"/>
</dbReference>
<dbReference type="PANTHER" id="PTHR34047:SF8">
    <property type="entry name" value="PROTEIN YKFC"/>
    <property type="match status" value="1"/>
</dbReference>
<dbReference type="Pfam" id="PF00078">
    <property type="entry name" value="RVT_1"/>
    <property type="match status" value="1"/>
</dbReference>
<dbReference type="SUPFAM" id="SSF56672">
    <property type="entry name" value="DNA/RNA polymerases"/>
    <property type="match status" value="1"/>
</dbReference>
<dbReference type="PROSITE" id="PS50878">
    <property type="entry name" value="RT_POL"/>
    <property type="match status" value="1"/>
</dbReference>
<proteinExistence type="inferred from homology"/>
<comment type="miscellaneous">
    <text evidence="2">Encoded by the CP4-6 prophage.</text>
</comment>
<comment type="miscellaneous">
    <text evidence="2">A short reverse transcriptase-like protein missing about 140 C-terminal residues compared to orthologs.</text>
</comment>
<comment type="similarity">
    <text evidence="2">Belongs to the bacterial reverse transcriptase family.</text>
</comment>
<comment type="sequence caution" evidence="2">
    <conflict type="erroneous initiation">
        <sequence resource="EMBL-CDS" id="AAB08678"/>
    </conflict>
    <text>Truncated N-terminus.</text>
</comment>
<name>YKFC_ECOLI</name>
<evidence type="ECO:0000255" key="1">
    <source>
        <dbReference type="PROSITE-ProRule" id="PRU00405"/>
    </source>
</evidence>
<evidence type="ECO:0000305" key="2"/>
<accession>Q47688</accession>
<accession>A0A385XJA9</accession>
<accession>P77710</accession>
<keyword id="KW-0460">Magnesium</keyword>
<keyword id="KW-0479">Metal-binding</keyword>
<keyword id="KW-1185">Reference proteome</keyword>